<sequence>MFYPDPFDVIIIGGGHAGTEAAMAAARMGQQTLLLTHNIDTLGQMSCNPAIGGIGKGHLVKEVDALGGLMAKAIDQAGIQFRILNASKGPAVRATRAQADRVLYRQAVRTALENQPNLMIFQQAVEDLIVENDRVVGAVTQMGLKFRAKAVVLTVGTFLDGKIHIGLDNYSGGRAGDPPSIPLSRRLRELPLRVGRLKTGTPPRIDARTIDFSVLAQQHGDNPMPVFSFMGNASQHPQQVPCYITHTNEKTHDVIRSNLDRSPMYAGVIEGVGPRYCPSIEDKVMRFADRNQHQIFLEPEGLTSNEIYPNGISTSLPFDVQMQIVRSMQGMENAKIVRPGYAIEYDFFDPRDLKPTLESKFIQGLFFAGQINGTTGYEEAAAQGLLAGLNAARLSADKEGWAPARSQAYLGVLVDDLCTLGTKEPYRMFTSRAEYRLMLREDNADLRLTEIGRELGLVDDERWARFNEKLENIERERQRLKSTWVTPSAEAAAEVNAHLTAPLSREASGEDLLRRPEMTYEKLTTLTPFAPALTDEQAAEQVEIQVKYEGYIARQQDEIEKQLRNENTLLPATLDYRQVSGLSNEVIAKLNDHKPASIGQASRISGVTPAAISILLVWLKKQGMLRRSA</sequence>
<gene>
    <name evidence="1" type="primary">mnmG</name>
    <name evidence="1" type="synonym">gidA</name>
    <name type="ordered locus">EC55989_4216</name>
</gene>
<feature type="chain" id="PRO_1000122747" description="tRNA uridine 5-carboxymethylaminomethyl modification enzyme MnmG">
    <location>
        <begin position="1"/>
        <end position="629"/>
    </location>
</feature>
<feature type="binding site" evidence="1">
    <location>
        <begin position="13"/>
        <end position="18"/>
    </location>
    <ligand>
        <name>FAD</name>
        <dbReference type="ChEBI" id="CHEBI:57692"/>
    </ligand>
</feature>
<feature type="binding site" evidence="1">
    <location>
        <position position="125"/>
    </location>
    <ligand>
        <name>FAD</name>
        <dbReference type="ChEBI" id="CHEBI:57692"/>
    </ligand>
</feature>
<feature type="binding site" evidence="1">
    <location>
        <position position="180"/>
    </location>
    <ligand>
        <name>FAD</name>
        <dbReference type="ChEBI" id="CHEBI:57692"/>
    </ligand>
</feature>
<feature type="binding site" evidence="1">
    <location>
        <begin position="273"/>
        <end position="287"/>
    </location>
    <ligand>
        <name>NAD(+)</name>
        <dbReference type="ChEBI" id="CHEBI:57540"/>
    </ligand>
</feature>
<feature type="binding site" evidence="1">
    <location>
        <position position="370"/>
    </location>
    <ligand>
        <name>FAD</name>
        <dbReference type="ChEBI" id="CHEBI:57692"/>
    </ligand>
</feature>
<dbReference type="EMBL" id="CU928145">
    <property type="protein sequence ID" value="CAV00833.1"/>
    <property type="molecule type" value="Genomic_DNA"/>
</dbReference>
<dbReference type="RefSeq" id="WP_000499788.1">
    <property type="nucleotide sequence ID" value="NZ_CP028304.1"/>
</dbReference>
<dbReference type="SMR" id="B7L889"/>
<dbReference type="GeneID" id="75205459"/>
<dbReference type="KEGG" id="eck:EC55989_4216"/>
<dbReference type="HOGENOM" id="CLU_007831_2_2_6"/>
<dbReference type="Proteomes" id="UP000000746">
    <property type="component" value="Chromosome"/>
</dbReference>
<dbReference type="GO" id="GO:0005829">
    <property type="term" value="C:cytosol"/>
    <property type="evidence" value="ECO:0007669"/>
    <property type="project" value="TreeGrafter"/>
</dbReference>
<dbReference type="GO" id="GO:0050660">
    <property type="term" value="F:flavin adenine dinucleotide binding"/>
    <property type="evidence" value="ECO:0007669"/>
    <property type="project" value="UniProtKB-UniRule"/>
</dbReference>
<dbReference type="GO" id="GO:0030488">
    <property type="term" value="P:tRNA methylation"/>
    <property type="evidence" value="ECO:0007669"/>
    <property type="project" value="TreeGrafter"/>
</dbReference>
<dbReference type="GO" id="GO:0002098">
    <property type="term" value="P:tRNA wobble uridine modification"/>
    <property type="evidence" value="ECO:0007669"/>
    <property type="project" value="InterPro"/>
</dbReference>
<dbReference type="FunFam" id="1.10.10.1800:FF:000001">
    <property type="entry name" value="tRNA uridine 5-carboxymethylaminomethyl modification enzyme MnmG"/>
    <property type="match status" value="1"/>
</dbReference>
<dbReference type="FunFam" id="1.10.150.570:FF:000001">
    <property type="entry name" value="tRNA uridine 5-carboxymethylaminomethyl modification enzyme MnmG"/>
    <property type="match status" value="1"/>
</dbReference>
<dbReference type="FunFam" id="3.50.50.60:FF:000002">
    <property type="entry name" value="tRNA uridine 5-carboxymethylaminomethyl modification enzyme MnmG"/>
    <property type="match status" value="1"/>
</dbReference>
<dbReference type="FunFam" id="3.50.50.60:FF:000010">
    <property type="entry name" value="tRNA uridine 5-carboxymethylaminomethyl modification enzyme MnmG"/>
    <property type="match status" value="1"/>
</dbReference>
<dbReference type="Gene3D" id="3.50.50.60">
    <property type="entry name" value="FAD/NAD(P)-binding domain"/>
    <property type="match status" value="2"/>
</dbReference>
<dbReference type="Gene3D" id="1.10.150.570">
    <property type="entry name" value="GidA associated domain, C-terminal subdomain"/>
    <property type="match status" value="1"/>
</dbReference>
<dbReference type="Gene3D" id="1.10.10.1800">
    <property type="entry name" value="tRNA uridine 5-carboxymethylaminomethyl modification enzyme MnmG/GidA"/>
    <property type="match status" value="1"/>
</dbReference>
<dbReference type="HAMAP" id="MF_00129">
    <property type="entry name" value="MnmG_GidA"/>
    <property type="match status" value="1"/>
</dbReference>
<dbReference type="InterPro" id="IPR036188">
    <property type="entry name" value="FAD/NAD-bd_sf"/>
</dbReference>
<dbReference type="InterPro" id="IPR049312">
    <property type="entry name" value="GIDA_C_N"/>
</dbReference>
<dbReference type="InterPro" id="IPR004416">
    <property type="entry name" value="MnmG"/>
</dbReference>
<dbReference type="InterPro" id="IPR002218">
    <property type="entry name" value="MnmG-rel"/>
</dbReference>
<dbReference type="InterPro" id="IPR020595">
    <property type="entry name" value="MnmG-rel_CS"/>
</dbReference>
<dbReference type="InterPro" id="IPR026904">
    <property type="entry name" value="MnmG_C"/>
</dbReference>
<dbReference type="InterPro" id="IPR047001">
    <property type="entry name" value="MnmG_C_subdom"/>
</dbReference>
<dbReference type="InterPro" id="IPR044920">
    <property type="entry name" value="MnmG_C_subdom_sf"/>
</dbReference>
<dbReference type="InterPro" id="IPR040131">
    <property type="entry name" value="MnmG_N"/>
</dbReference>
<dbReference type="NCBIfam" id="TIGR00136">
    <property type="entry name" value="mnmG_gidA"/>
    <property type="match status" value="1"/>
</dbReference>
<dbReference type="PANTHER" id="PTHR11806">
    <property type="entry name" value="GLUCOSE INHIBITED DIVISION PROTEIN A"/>
    <property type="match status" value="1"/>
</dbReference>
<dbReference type="PANTHER" id="PTHR11806:SF0">
    <property type="entry name" value="PROTEIN MTO1 HOMOLOG, MITOCHONDRIAL"/>
    <property type="match status" value="1"/>
</dbReference>
<dbReference type="Pfam" id="PF01134">
    <property type="entry name" value="GIDA"/>
    <property type="match status" value="1"/>
</dbReference>
<dbReference type="Pfam" id="PF21680">
    <property type="entry name" value="GIDA_C_1st"/>
    <property type="match status" value="1"/>
</dbReference>
<dbReference type="Pfam" id="PF13932">
    <property type="entry name" value="SAM_GIDA_C"/>
    <property type="match status" value="1"/>
</dbReference>
<dbReference type="SMART" id="SM01228">
    <property type="entry name" value="GIDA_assoc_3"/>
    <property type="match status" value="1"/>
</dbReference>
<dbReference type="SUPFAM" id="SSF51905">
    <property type="entry name" value="FAD/NAD(P)-binding domain"/>
    <property type="match status" value="1"/>
</dbReference>
<dbReference type="PROSITE" id="PS01280">
    <property type="entry name" value="GIDA_1"/>
    <property type="match status" value="1"/>
</dbReference>
<dbReference type="PROSITE" id="PS01281">
    <property type="entry name" value="GIDA_2"/>
    <property type="match status" value="1"/>
</dbReference>
<protein>
    <recommendedName>
        <fullName evidence="1">tRNA uridine 5-carboxymethylaminomethyl modification enzyme MnmG</fullName>
    </recommendedName>
    <alternativeName>
        <fullName evidence="1">Glucose-inhibited division protein A</fullName>
    </alternativeName>
</protein>
<comment type="function">
    <text evidence="1">NAD-binding protein involved in the addition of a carboxymethylaminomethyl (cmnm) group at the wobble position (U34) of certain tRNAs, forming tRNA-cmnm(5)s(2)U34.</text>
</comment>
<comment type="cofactor">
    <cofactor evidence="1">
        <name>FAD</name>
        <dbReference type="ChEBI" id="CHEBI:57692"/>
    </cofactor>
</comment>
<comment type="subunit">
    <text evidence="1">Homodimer. Heterotetramer of two MnmE and two MnmG subunits.</text>
</comment>
<comment type="subcellular location">
    <subcellularLocation>
        <location evidence="1">Cytoplasm</location>
    </subcellularLocation>
</comment>
<comment type="similarity">
    <text evidence="1">Belongs to the MnmG family.</text>
</comment>
<keyword id="KW-0963">Cytoplasm</keyword>
<keyword id="KW-0274">FAD</keyword>
<keyword id="KW-0285">Flavoprotein</keyword>
<keyword id="KW-0520">NAD</keyword>
<keyword id="KW-1185">Reference proteome</keyword>
<keyword id="KW-0819">tRNA processing</keyword>
<organism>
    <name type="scientific">Escherichia coli (strain 55989 / EAEC)</name>
    <dbReference type="NCBI Taxonomy" id="585055"/>
    <lineage>
        <taxon>Bacteria</taxon>
        <taxon>Pseudomonadati</taxon>
        <taxon>Pseudomonadota</taxon>
        <taxon>Gammaproteobacteria</taxon>
        <taxon>Enterobacterales</taxon>
        <taxon>Enterobacteriaceae</taxon>
        <taxon>Escherichia</taxon>
    </lineage>
</organism>
<evidence type="ECO:0000255" key="1">
    <source>
        <dbReference type="HAMAP-Rule" id="MF_00129"/>
    </source>
</evidence>
<name>MNMG_ECO55</name>
<proteinExistence type="inferred from homology"/>
<accession>B7L889</accession>
<reference key="1">
    <citation type="journal article" date="2009" name="PLoS Genet.">
        <title>Organised genome dynamics in the Escherichia coli species results in highly diverse adaptive paths.</title>
        <authorList>
            <person name="Touchon M."/>
            <person name="Hoede C."/>
            <person name="Tenaillon O."/>
            <person name="Barbe V."/>
            <person name="Baeriswyl S."/>
            <person name="Bidet P."/>
            <person name="Bingen E."/>
            <person name="Bonacorsi S."/>
            <person name="Bouchier C."/>
            <person name="Bouvet O."/>
            <person name="Calteau A."/>
            <person name="Chiapello H."/>
            <person name="Clermont O."/>
            <person name="Cruveiller S."/>
            <person name="Danchin A."/>
            <person name="Diard M."/>
            <person name="Dossat C."/>
            <person name="Karoui M.E."/>
            <person name="Frapy E."/>
            <person name="Garry L."/>
            <person name="Ghigo J.M."/>
            <person name="Gilles A.M."/>
            <person name="Johnson J."/>
            <person name="Le Bouguenec C."/>
            <person name="Lescat M."/>
            <person name="Mangenot S."/>
            <person name="Martinez-Jehanne V."/>
            <person name="Matic I."/>
            <person name="Nassif X."/>
            <person name="Oztas S."/>
            <person name="Petit M.A."/>
            <person name="Pichon C."/>
            <person name="Rouy Z."/>
            <person name="Ruf C.S."/>
            <person name="Schneider D."/>
            <person name="Tourret J."/>
            <person name="Vacherie B."/>
            <person name="Vallenet D."/>
            <person name="Medigue C."/>
            <person name="Rocha E.P.C."/>
            <person name="Denamur E."/>
        </authorList>
    </citation>
    <scope>NUCLEOTIDE SEQUENCE [LARGE SCALE GENOMIC DNA]</scope>
    <source>
        <strain>55989 / EAEC</strain>
    </source>
</reference>